<protein>
    <recommendedName>
        <fullName>Uncharacterized protein ORF116</fullName>
    </recommendedName>
</protein>
<proteinExistence type="predicted"/>
<dbReference type="EMBL" id="AJ854042">
    <property type="protein sequence ID" value="CAH69437.1"/>
    <property type="molecule type" value="Genomic_DNA"/>
</dbReference>
<dbReference type="RefSeq" id="YP_001496975.1">
    <property type="nucleotide sequence ID" value="NC_009884.1"/>
</dbReference>
<dbReference type="KEGG" id="vg:5656094"/>
<dbReference type="Proteomes" id="UP000006364">
    <property type="component" value="Genome"/>
</dbReference>
<organism>
    <name type="scientific">Acidianus filamentous virus 2 (isolate Italy/Pozzuoli)</name>
    <name type="common">AFV-2</name>
    <dbReference type="NCBI Taxonomy" id="654910"/>
    <lineage>
        <taxon>Viruses</taxon>
        <taxon>Adnaviria</taxon>
        <taxon>Zilligvirae</taxon>
        <taxon>Taleaviricota</taxon>
        <taxon>Tokiviricetes</taxon>
        <taxon>Ligamenvirales</taxon>
        <taxon>Lipothrixviridae</taxon>
        <taxon>Deltalipothrixvirus</taxon>
        <taxon>Acidianus filamentous virus 2</taxon>
    </lineage>
</organism>
<gene>
    <name type="ORF">ORF116</name>
</gene>
<sequence length="116" mass="14295">MFQLDFDFKDLSRWDNFYRVYKAIHELSMICKPVVKETHKGYHIYCDIELSPEKIMNLRYYFGDDIWRIMYDEQRMIFAPHLFDVLYQEKEVFTITPHGIHVDENYHEYDVTDKVL</sequence>
<reference key="1">
    <citation type="journal article" date="2005" name="J. Bacteriol.">
        <title>Structure and genome organization of AFV2, a novel archaeal lipothrixvirus with unusual terminal and core structures.</title>
        <authorList>
            <person name="Haring M."/>
            <person name="Vestergaard G."/>
            <person name="Brugger K."/>
            <person name="Rachel R."/>
            <person name="Garrett R.A."/>
            <person name="Prangishvili D."/>
        </authorList>
    </citation>
    <scope>NUCLEOTIDE SEQUENCE [GENOMIC DNA]</scope>
</reference>
<feature type="chain" id="PRO_0000384505" description="Uncharacterized protein ORF116">
    <location>
        <begin position="1"/>
        <end position="116"/>
    </location>
</feature>
<organismHost>
    <name type="scientific">Acidianus sp. F28</name>
    <dbReference type="NCBI Taxonomy" id="315458"/>
</organismHost>
<name>Y116_AFV2P</name>
<keyword id="KW-1185">Reference proteome</keyword>
<accession>Q573B9</accession>